<organism>
    <name type="scientific">Saccharolobus islandicus (strain M.14.25 / Kamchatka #1)</name>
    <name type="common">Sulfolobus islandicus</name>
    <dbReference type="NCBI Taxonomy" id="427317"/>
    <lineage>
        <taxon>Archaea</taxon>
        <taxon>Thermoproteota</taxon>
        <taxon>Thermoprotei</taxon>
        <taxon>Sulfolobales</taxon>
        <taxon>Sulfolobaceae</taxon>
        <taxon>Saccharolobus</taxon>
    </lineage>
</organism>
<sequence length="237" mass="27401">MYSVLLNPSNTEIYSFLTERIYRELVVIFATCKVNYKGRAESVASESPRLIILKPDGTVIIHESVKREPLNWQPPGTKIEIMNDYPLKIVAQRKRPKEVIEIDLKEVFYITSAEVKDGDFVIKGREIDIVNTIIQNPSMIEEGFVPLTREYNTPYGKIDLVGLDKKGNFVIIEVKRSKAQLSAVSQLYRYYLHIRETKEDKVRGILVAPDLTTHARELLQKLGLEFIRYDIQKYSSY</sequence>
<evidence type="ECO:0000255" key="1">
    <source>
        <dbReference type="HAMAP-Rule" id="MF_00722"/>
    </source>
</evidence>
<name>NUCS_SACI4</name>
<keyword id="KW-0963">Cytoplasm</keyword>
<keyword id="KW-0238">DNA-binding</keyword>
<keyword id="KW-0255">Endonuclease</keyword>
<keyword id="KW-0378">Hydrolase</keyword>
<keyword id="KW-0540">Nuclease</keyword>
<proteinExistence type="inferred from homology"/>
<feature type="chain" id="PRO_1000212719" description="Endonuclease NucS">
    <location>
        <begin position="1"/>
        <end position="237"/>
    </location>
</feature>
<gene>
    <name evidence="1" type="primary">nucS</name>
    <name type="ordered locus">M1425_0025</name>
</gene>
<dbReference type="EC" id="3.1.-.-" evidence="1"/>
<dbReference type="EMBL" id="CP001400">
    <property type="protein sequence ID" value="ACP36917.1"/>
    <property type="molecule type" value="Genomic_DNA"/>
</dbReference>
<dbReference type="RefSeq" id="WP_012710204.1">
    <property type="nucleotide sequence ID" value="NC_012588.1"/>
</dbReference>
<dbReference type="SMR" id="C3MTN3"/>
<dbReference type="GeneID" id="84060527"/>
<dbReference type="KEGG" id="sia:M1425_0025"/>
<dbReference type="HOGENOM" id="CLU_069350_1_0_2"/>
<dbReference type="Proteomes" id="UP000001350">
    <property type="component" value="Chromosome"/>
</dbReference>
<dbReference type="GO" id="GO:0005737">
    <property type="term" value="C:cytoplasm"/>
    <property type="evidence" value="ECO:0007669"/>
    <property type="project" value="UniProtKB-SubCell"/>
</dbReference>
<dbReference type="GO" id="GO:0003677">
    <property type="term" value="F:DNA binding"/>
    <property type="evidence" value="ECO:0007669"/>
    <property type="project" value="UniProtKB-KW"/>
</dbReference>
<dbReference type="GO" id="GO:0000014">
    <property type="term" value="F:single-stranded DNA endodeoxyribonuclease activity"/>
    <property type="evidence" value="ECO:0007669"/>
    <property type="project" value="UniProtKB-UniRule"/>
</dbReference>
<dbReference type="CDD" id="cd22341">
    <property type="entry name" value="NucS-like"/>
    <property type="match status" value="1"/>
</dbReference>
<dbReference type="Gene3D" id="2.70.180.20">
    <property type="match status" value="1"/>
</dbReference>
<dbReference type="Gene3D" id="3.40.1350.10">
    <property type="match status" value="1"/>
</dbReference>
<dbReference type="HAMAP" id="MF_00722">
    <property type="entry name" value="NucS"/>
    <property type="match status" value="1"/>
</dbReference>
<dbReference type="InterPro" id="IPR002793">
    <property type="entry name" value="Endonuclease_NucS"/>
</dbReference>
<dbReference type="InterPro" id="IPR048301">
    <property type="entry name" value="NucS_C"/>
</dbReference>
<dbReference type="InterPro" id="IPR048302">
    <property type="entry name" value="NucS_N"/>
</dbReference>
<dbReference type="InterPro" id="IPR049173">
    <property type="entry name" value="NucS_N_sf"/>
</dbReference>
<dbReference type="InterPro" id="IPR011335">
    <property type="entry name" value="Restrct_endonuc-II-like"/>
</dbReference>
<dbReference type="InterPro" id="IPR011856">
    <property type="entry name" value="tRNA_endonuc-like_dom_sf"/>
</dbReference>
<dbReference type="NCBIfam" id="NF003270">
    <property type="entry name" value="PRK04247.1"/>
    <property type="match status" value="1"/>
</dbReference>
<dbReference type="PANTHER" id="PTHR38814">
    <property type="entry name" value="ENDONUCLEASE NUCS"/>
    <property type="match status" value="1"/>
</dbReference>
<dbReference type="PANTHER" id="PTHR38814:SF1">
    <property type="entry name" value="ENDONUCLEASE NUCS"/>
    <property type="match status" value="1"/>
</dbReference>
<dbReference type="Pfam" id="PF01939">
    <property type="entry name" value="NucS_C"/>
    <property type="match status" value="1"/>
</dbReference>
<dbReference type="Pfam" id="PF21003">
    <property type="entry name" value="NucS_N"/>
    <property type="match status" value="1"/>
</dbReference>
<dbReference type="SUPFAM" id="SSF52980">
    <property type="entry name" value="Restriction endonuclease-like"/>
    <property type="match status" value="1"/>
</dbReference>
<reference key="1">
    <citation type="journal article" date="2009" name="Proc. Natl. Acad. Sci. U.S.A.">
        <title>Biogeography of the Sulfolobus islandicus pan-genome.</title>
        <authorList>
            <person name="Reno M.L."/>
            <person name="Held N.L."/>
            <person name="Fields C.J."/>
            <person name="Burke P.V."/>
            <person name="Whitaker R.J."/>
        </authorList>
    </citation>
    <scope>NUCLEOTIDE SEQUENCE [LARGE SCALE GENOMIC DNA]</scope>
    <source>
        <strain>M.14.25 / Kamchatka #1</strain>
    </source>
</reference>
<protein>
    <recommendedName>
        <fullName evidence="1">Endonuclease NucS</fullName>
        <ecNumber evidence="1">3.1.-.-</ecNumber>
    </recommendedName>
</protein>
<accession>C3MTN3</accession>
<comment type="function">
    <text evidence="1">Cleaves both 3' and 5' ssDNA extremities of branched DNA structures.</text>
</comment>
<comment type="subcellular location">
    <subcellularLocation>
        <location evidence="1">Cytoplasm</location>
    </subcellularLocation>
</comment>
<comment type="similarity">
    <text evidence="1">Belongs to the NucS endonuclease family.</text>
</comment>